<protein>
    <recommendedName>
        <fullName>Preprotein translocase subunit SECY, chloroplastic</fullName>
    </recommendedName>
    <alternativeName>
        <fullName>CpSecY</fullName>
    </alternativeName>
</protein>
<keyword id="KW-0150">Chloroplast</keyword>
<keyword id="KW-0472">Membrane</keyword>
<keyword id="KW-0934">Plastid</keyword>
<keyword id="KW-0653">Protein transport</keyword>
<keyword id="KW-1185">Reference proteome</keyword>
<keyword id="KW-0793">Thylakoid</keyword>
<keyword id="KW-0809">Transit peptide</keyword>
<keyword id="KW-0811">Translocation</keyword>
<keyword id="KW-0812">Transmembrane</keyword>
<keyword id="KW-1133">Transmembrane helix</keyword>
<keyword id="KW-0813">Transport</keyword>
<feature type="transit peptide" description="Chloroplast" evidence="2">
    <location>
        <begin position="1"/>
        <end status="unknown"/>
    </location>
</feature>
<feature type="chain" id="PRO_0000031998" description="Preprotein translocase subunit SECY, chloroplastic">
    <location>
        <begin status="unknown"/>
        <end position="545"/>
    </location>
</feature>
<feature type="transmembrane region" description="Helical" evidence="2">
    <location>
        <begin position="139"/>
        <end position="159"/>
    </location>
</feature>
<feature type="transmembrane region" description="Helical" evidence="2">
    <location>
        <begin position="189"/>
        <end position="209"/>
    </location>
</feature>
<feature type="transmembrane region" description="Helical" evidence="2">
    <location>
        <begin position="234"/>
        <end position="254"/>
    </location>
</feature>
<feature type="transmembrane region" description="Helical" evidence="2">
    <location>
        <begin position="264"/>
        <end position="284"/>
    </location>
</feature>
<feature type="transmembrane region" description="Helical" evidence="2">
    <location>
        <begin position="292"/>
        <end position="312"/>
    </location>
</feature>
<feature type="transmembrane region" description="Helical" evidence="2">
    <location>
        <begin position="325"/>
        <end position="345"/>
    </location>
</feature>
<feature type="transmembrane region" description="Helical" evidence="2">
    <location>
        <begin position="379"/>
        <end position="399"/>
    </location>
</feature>
<feature type="transmembrane region" description="Helical" evidence="2">
    <location>
        <begin position="412"/>
        <end position="432"/>
    </location>
</feature>
<feature type="transmembrane region" description="Helical" evidence="2">
    <location>
        <begin position="477"/>
        <end position="497"/>
    </location>
</feature>
<feature type="transmembrane region" description="Helical" evidence="2">
    <location>
        <begin position="500"/>
        <end position="520"/>
    </location>
</feature>
<accession>P93690</accession>
<evidence type="ECO:0000250" key="1"/>
<evidence type="ECO:0000255" key="2"/>
<evidence type="ECO:0000305" key="3"/>
<gene>
    <name type="primary">SECY</name>
</gene>
<sequence>MLVTFTEAAATASTSSLISFSLSSPPKFHHKSRIYGCKATFGLRTKPTSWIAAASLSSSTTTTSSCGSSVFDPLGIEQDNSWGVASAWDGVLKFVSQTFESSSGTRKDRSSSARGVAAAIEDSSIDFGDFFKGPLPGKFLTLLGLLALSRLGIYVPLGGVNREAFVGNLDQNSFISTLDSFSGGGIGRLGICSLGIVPFINAQIVFQLLSQVYPKLQDLQKKEGEAGRKKIKQYTQYASVGFALVQAIGQVLFLRPYVNDYSTEWVLSSVILLTLGSVFTTYLGERISDLKLGNGTSLLIFTNIISYLPASFGRTVAEAYQEGNYTGLAIIVVSFVSLVFGIVYVQEAERKIPMNYASRYSGKSGGLQKSAYLPFKVNSAGVMPIIFSTSSLSLPATLARFTGLDILKKAAVALTPGGSFYLPTNILLIAFFNYYYTFLQLDPDDVSEQLKRQGASIPLVRPGKSTAAYIKTVLSRISVLGSGFLAILAAGPAVVEQATHLTAFRGFAGTSVLILVGCATDTARKVQAELISQKYKNIEFYDLEK</sequence>
<organism>
    <name type="scientific">Spinacia oleracea</name>
    <name type="common">Spinach</name>
    <dbReference type="NCBI Taxonomy" id="3562"/>
    <lineage>
        <taxon>Eukaryota</taxon>
        <taxon>Viridiplantae</taxon>
        <taxon>Streptophyta</taxon>
        <taxon>Embryophyta</taxon>
        <taxon>Tracheophyta</taxon>
        <taxon>Spermatophyta</taxon>
        <taxon>Magnoliopsida</taxon>
        <taxon>eudicotyledons</taxon>
        <taxon>Gunneridae</taxon>
        <taxon>Pentapetalae</taxon>
        <taxon>Caryophyllales</taxon>
        <taxon>Chenopodiaceae</taxon>
        <taxon>Chenopodioideae</taxon>
        <taxon>Anserineae</taxon>
        <taxon>Spinacia</taxon>
    </lineage>
</organism>
<dbReference type="EMBL" id="Z54351">
    <property type="protein sequence ID" value="CAA91162.1"/>
    <property type="molecule type" value="mRNA"/>
</dbReference>
<dbReference type="PIR" id="T09195">
    <property type="entry name" value="T09195"/>
</dbReference>
<dbReference type="SMR" id="P93690"/>
<dbReference type="Proteomes" id="UP001155700">
    <property type="component" value="Unplaced"/>
</dbReference>
<dbReference type="GO" id="GO:0009535">
    <property type="term" value="C:chloroplast thylakoid membrane"/>
    <property type="evidence" value="ECO:0000318"/>
    <property type="project" value="GO_Central"/>
</dbReference>
<dbReference type="GO" id="GO:0008320">
    <property type="term" value="F:protein transmembrane transporter activity"/>
    <property type="evidence" value="ECO:0000318"/>
    <property type="project" value="GO_Central"/>
</dbReference>
<dbReference type="GO" id="GO:0005048">
    <property type="term" value="F:signal sequence binding"/>
    <property type="evidence" value="ECO:0000318"/>
    <property type="project" value="GO_Central"/>
</dbReference>
<dbReference type="GO" id="GO:0006616">
    <property type="term" value="P:SRP-dependent cotranslational protein targeting to membrane, translocation"/>
    <property type="evidence" value="ECO:0000318"/>
    <property type="project" value="GO_Central"/>
</dbReference>
<dbReference type="FunFam" id="1.10.3370.10:FF:000003">
    <property type="entry name" value="Preprotein translocase subunit SECY, chloroplastic"/>
    <property type="match status" value="1"/>
</dbReference>
<dbReference type="Gene3D" id="1.10.3370.10">
    <property type="entry name" value="SecY subunit domain"/>
    <property type="match status" value="1"/>
</dbReference>
<dbReference type="HAMAP" id="MF_01465">
    <property type="entry name" value="SecY"/>
    <property type="match status" value="1"/>
</dbReference>
<dbReference type="InterPro" id="IPR026593">
    <property type="entry name" value="SecY"/>
</dbReference>
<dbReference type="InterPro" id="IPR002208">
    <property type="entry name" value="SecY/SEC61-alpha"/>
</dbReference>
<dbReference type="InterPro" id="IPR030659">
    <property type="entry name" value="SecY_CS"/>
</dbReference>
<dbReference type="InterPro" id="IPR023201">
    <property type="entry name" value="SecY_dom_sf"/>
</dbReference>
<dbReference type="NCBIfam" id="TIGR00967">
    <property type="entry name" value="3a0501s007"/>
    <property type="match status" value="1"/>
</dbReference>
<dbReference type="PANTHER" id="PTHR10906">
    <property type="entry name" value="SECY/SEC61-ALPHA FAMILY MEMBER"/>
    <property type="match status" value="1"/>
</dbReference>
<dbReference type="Pfam" id="PF00344">
    <property type="entry name" value="SecY"/>
    <property type="match status" value="1"/>
</dbReference>
<dbReference type="PRINTS" id="PR00303">
    <property type="entry name" value="SECYTRNLCASE"/>
</dbReference>
<dbReference type="SUPFAM" id="SSF103491">
    <property type="entry name" value="Preprotein translocase SecY subunit"/>
    <property type="match status" value="1"/>
</dbReference>
<dbReference type="PROSITE" id="PS00755">
    <property type="entry name" value="SECY_1"/>
    <property type="match status" value="1"/>
</dbReference>
<dbReference type="PROSITE" id="PS00756">
    <property type="entry name" value="SECY_2"/>
    <property type="match status" value="1"/>
</dbReference>
<reference key="1">
    <citation type="online journal article" date="1996" name="Plant Gene Register">
        <title>Isolation and characterization of a cDNA encoding the SecY protein from spinach chloroplasts.</title>
        <authorList>
            <person name="Berghoefer J."/>
            <person name="Kloesgen R.B."/>
        </authorList>
        <locator>PGR96-090</locator>
    </citation>
    <scope>NUCLEOTIDE SEQUENCE [MRNA]</scope>
    <source>
        <strain>cv. Monatol</strain>
        <tissue>Leaf</tissue>
    </source>
</reference>
<comment type="function">
    <text evidence="1">The central subunit of the protein translocation channel SecYE. Consists of two halves formed by TMs 1-5 and 6-10. These two domains form a lateral gate at the front which open onto the bilayer between TMs 2 and 7, and are clamped together by SecE at the back. The channel is closed by both a pore ring composed of hydrophobic SecY resides and a short helix (helix 2A) on the extracellular side of the membrane which forms a plug (By similarity).</text>
</comment>
<comment type="subunit">
    <text evidence="1">Component of the plastid Sec protein translocase complex, which is composed of at least SECY and SECE.</text>
</comment>
<comment type="subcellular location">
    <subcellularLocation>
        <location evidence="1">Plastid</location>
        <location evidence="1">Chloroplast thylakoid membrane</location>
        <topology evidence="1">Multi-pass membrane protein</topology>
    </subcellularLocation>
</comment>
<comment type="similarity">
    <text evidence="3">Belongs to the SecY/SEC61-alpha family.</text>
</comment>
<name>SECY_SPIOL</name>
<proteinExistence type="evidence at transcript level"/>